<evidence type="ECO:0000255" key="1">
    <source>
        <dbReference type="HAMAP-Rule" id="MF_00649"/>
    </source>
</evidence>
<evidence type="ECO:0000256" key="2">
    <source>
        <dbReference type="SAM" id="MobiDB-lite"/>
    </source>
</evidence>
<gene>
    <name evidence="1" type="primary">yacG</name>
    <name type="ordered locus">YPTS_0728</name>
</gene>
<keyword id="KW-0479">Metal-binding</keyword>
<keyword id="KW-0862">Zinc</keyword>
<comment type="function">
    <text evidence="1">Inhibits all the catalytic activities of DNA gyrase by preventing its interaction with DNA. Acts by binding directly to the C-terminal domain of GyrB, which probably disrupts DNA binding by the gyrase.</text>
</comment>
<comment type="cofactor">
    <cofactor evidence="1">
        <name>Zn(2+)</name>
        <dbReference type="ChEBI" id="CHEBI:29105"/>
    </cofactor>
    <text evidence="1">Binds 1 zinc ion.</text>
</comment>
<comment type="subunit">
    <text evidence="1">Interacts with GyrB.</text>
</comment>
<comment type="similarity">
    <text evidence="1">Belongs to the DNA gyrase inhibitor YacG family.</text>
</comment>
<reference key="1">
    <citation type="submission" date="2008-04" db="EMBL/GenBank/DDBJ databases">
        <title>Complete sequence of Yersinia pseudotuberculosis PB1/+.</title>
        <authorList>
            <person name="Copeland A."/>
            <person name="Lucas S."/>
            <person name="Lapidus A."/>
            <person name="Glavina del Rio T."/>
            <person name="Dalin E."/>
            <person name="Tice H."/>
            <person name="Bruce D."/>
            <person name="Goodwin L."/>
            <person name="Pitluck S."/>
            <person name="Munk A.C."/>
            <person name="Brettin T."/>
            <person name="Detter J.C."/>
            <person name="Han C."/>
            <person name="Tapia R."/>
            <person name="Schmutz J."/>
            <person name="Larimer F."/>
            <person name="Land M."/>
            <person name="Hauser L."/>
            <person name="Challacombe J.F."/>
            <person name="Green L."/>
            <person name="Lindler L.E."/>
            <person name="Nikolich M.P."/>
            <person name="Richardson P."/>
        </authorList>
    </citation>
    <scope>NUCLEOTIDE SEQUENCE [LARGE SCALE GENOMIC DNA]</scope>
    <source>
        <strain>PB1/+</strain>
    </source>
</reference>
<dbReference type="EMBL" id="CP001048">
    <property type="protein sequence ID" value="ACC87712.1"/>
    <property type="molecule type" value="Genomic_DNA"/>
</dbReference>
<dbReference type="RefSeq" id="WP_002209317.1">
    <property type="nucleotide sequence ID" value="NZ_CP009780.1"/>
</dbReference>
<dbReference type="SMR" id="B2K4F9"/>
<dbReference type="GeneID" id="57975278"/>
<dbReference type="KEGG" id="ypb:YPTS_0728"/>
<dbReference type="PATRIC" id="fig|502801.10.peg.58"/>
<dbReference type="GO" id="GO:0008657">
    <property type="term" value="F:DNA topoisomerase type II (double strand cut, ATP-hydrolyzing) inhibitor activity"/>
    <property type="evidence" value="ECO:0007669"/>
    <property type="project" value="UniProtKB-UniRule"/>
</dbReference>
<dbReference type="GO" id="GO:0008270">
    <property type="term" value="F:zinc ion binding"/>
    <property type="evidence" value="ECO:0007669"/>
    <property type="project" value="UniProtKB-UniRule"/>
</dbReference>
<dbReference type="GO" id="GO:0006355">
    <property type="term" value="P:regulation of DNA-templated transcription"/>
    <property type="evidence" value="ECO:0007669"/>
    <property type="project" value="InterPro"/>
</dbReference>
<dbReference type="Gene3D" id="3.30.50.10">
    <property type="entry name" value="Erythroid Transcription Factor GATA-1, subunit A"/>
    <property type="match status" value="1"/>
</dbReference>
<dbReference type="HAMAP" id="MF_00649">
    <property type="entry name" value="DNA_gyrase_inhibitor_YacG"/>
    <property type="match status" value="1"/>
</dbReference>
<dbReference type="InterPro" id="IPR005584">
    <property type="entry name" value="DNA_gyrase_inhibitor_YacG"/>
</dbReference>
<dbReference type="InterPro" id="IPR013088">
    <property type="entry name" value="Znf_NHR/GATA"/>
</dbReference>
<dbReference type="NCBIfam" id="NF001638">
    <property type="entry name" value="PRK00418.1"/>
    <property type="match status" value="1"/>
</dbReference>
<dbReference type="PANTHER" id="PTHR36150">
    <property type="entry name" value="DNA GYRASE INHIBITOR YACG"/>
    <property type="match status" value="1"/>
</dbReference>
<dbReference type="PANTHER" id="PTHR36150:SF1">
    <property type="entry name" value="DNA GYRASE INHIBITOR YACG"/>
    <property type="match status" value="1"/>
</dbReference>
<dbReference type="Pfam" id="PF03884">
    <property type="entry name" value="YacG"/>
    <property type="match status" value="1"/>
</dbReference>
<dbReference type="SUPFAM" id="SSF57716">
    <property type="entry name" value="Glucocorticoid receptor-like (DNA-binding domain)"/>
    <property type="match status" value="1"/>
</dbReference>
<name>YACG_YERPB</name>
<protein>
    <recommendedName>
        <fullName evidence="1">DNA gyrase inhibitor YacG</fullName>
    </recommendedName>
</protein>
<feature type="chain" id="PRO_1000130983" description="DNA gyrase inhibitor YacG">
    <location>
        <begin position="1"/>
        <end position="68"/>
    </location>
</feature>
<feature type="region of interest" description="Disordered" evidence="2">
    <location>
        <begin position="45"/>
        <end position="68"/>
    </location>
</feature>
<feature type="compositionally biased region" description="Acidic residues" evidence="2">
    <location>
        <begin position="53"/>
        <end position="68"/>
    </location>
</feature>
<feature type="binding site" evidence="1">
    <location>
        <position position="10"/>
    </location>
    <ligand>
        <name>Zn(2+)</name>
        <dbReference type="ChEBI" id="CHEBI:29105"/>
    </ligand>
</feature>
<feature type="binding site" evidence="1">
    <location>
        <position position="13"/>
    </location>
    <ligand>
        <name>Zn(2+)</name>
        <dbReference type="ChEBI" id="CHEBI:29105"/>
    </ligand>
</feature>
<feature type="binding site" evidence="1">
    <location>
        <position position="29"/>
    </location>
    <ligand>
        <name>Zn(2+)</name>
        <dbReference type="ChEBI" id="CHEBI:29105"/>
    </ligand>
</feature>
<feature type="binding site" evidence="1">
    <location>
        <position position="33"/>
    </location>
    <ligand>
        <name>Zn(2+)</name>
        <dbReference type="ChEBI" id="CHEBI:29105"/>
    </ligand>
</feature>
<accession>B2K4F9</accession>
<proteinExistence type="inferred from homology"/>
<sequence length="68" mass="7900">MESEQIQVNCPTCGKVVIWGEQSPFRPFCCKRCQLIDLGEWADEEKRIPSDTELSDSDEWSEEDPLKH</sequence>
<organism>
    <name type="scientific">Yersinia pseudotuberculosis serotype IB (strain PB1/+)</name>
    <dbReference type="NCBI Taxonomy" id="502801"/>
    <lineage>
        <taxon>Bacteria</taxon>
        <taxon>Pseudomonadati</taxon>
        <taxon>Pseudomonadota</taxon>
        <taxon>Gammaproteobacteria</taxon>
        <taxon>Enterobacterales</taxon>
        <taxon>Yersiniaceae</taxon>
        <taxon>Yersinia</taxon>
    </lineage>
</organism>